<accession>Q0V9B1</accession>
<accession>A4II70</accession>
<name>CHP3_XENTR</name>
<feature type="initiator methionine" description="Removed" evidence="4">
    <location>
        <position position="1"/>
    </location>
</feature>
<feature type="chain" id="PRO_0000390720" description="Calcineurin B homologous protein 3">
    <location>
        <begin position="2"/>
        <end position="214"/>
    </location>
</feature>
<feature type="domain" description="EF-hand" evidence="5">
    <location>
        <begin position="110"/>
        <end position="145"/>
    </location>
</feature>
<feature type="binding site" evidence="6">
    <location>
        <position position="123"/>
    </location>
    <ligand>
        <name>Ca(2+)</name>
        <dbReference type="ChEBI" id="CHEBI:29108"/>
    </ligand>
</feature>
<feature type="binding site" evidence="6">
    <location>
        <position position="125"/>
    </location>
    <ligand>
        <name>Ca(2+)</name>
        <dbReference type="ChEBI" id="CHEBI:29108"/>
    </ligand>
</feature>
<feature type="binding site" evidence="6">
    <location>
        <position position="127"/>
    </location>
    <ligand>
        <name>Ca(2+)</name>
        <dbReference type="ChEBI" id="CHEBI:29108"/>
    </ligand>
</feature>
<feature type="binding site" evidence="6">
    <location>
        <position position="129"/>
    </location>
    <ligand>
        <name>Ca(2+)</name>
        <dbReference type="ChEBI" id="CHEBI:29108"/>
    </ligand>
</feature>
<feature type="binding site" evidence="6">
    <location>
        <position position="134"/>
    </location>
    <ligand>
        <name>Ca(2+)</name>
        <dbReference type="ChEBI" id="CHEBI:29108"/>
    </ligand>
</feature>
<feature type="lipid moiety-binding region" description="N-myristoyl glycine" evidence="4">
    <location>
        <position position="2"/>
    </location>
</feature>
<organism>
    <name type="scientific">Xenopus tropicalis</name>
    <name type="common">Western clawed frog</name>
    <name type="synonym">Silurana tropicalis</name>
    <dbReference type="NCBI Taxonomy" id="8364"/>
    <lineage>
        <taxon>Eukaryota</taxon>
        <taxon>Metazoa</taxon>
        <taxon>Chordata</taxon>
        <taxon>Craniata</taxon>
        <taxon>Vertebrata</taxon>
        <taxon>Euteleostomi</taxon>
        <taxon>Amphibia</taxon>
        <taxon>Batrachia</taxon>
        <taxon>Anura</taxon>
        <taxon>Pipoidea</taxon>
        <taxon>Pipidae</taxon>
        <taxon>Xenopodinae</taxon>
        <taxon>Xenopus</taxon>
        <taxon>Silurana</taxon>
    </lineage>
</organism>
<comment type="function">
    <text evidence="1">Functions as an integral cofactor in cell pH regulation by controlling plasma membrane-type Na(+)/H(+) exchange activity. Promotes the induction of hematopoietic stem cell differentiation toward megakaryocytic lineage. Essential for the coupling of ERK cascade activation with the expression of ETS family genes in megakaryocytic differentiation. Also involved in granulocytic differentiation in a ERK-dependent manner. Inhibits the phosphatase activity of calcineurin (By similarity).</text>
</comment>
<comment type="subunit">
    <text evidence="3">Monomer (By similarity). Homodimer (By similarity).</text>
</comment>
<comment type="subcellular location">
    <subcellularLocation>
        <location evidence="2 3">Nucleus</location>
    </subcellularLocation>
    <subcellularLocation>
        <location evidence="2 3">Cytoplasm</location>
    </subcellularLocation>
    <subcellularLocation>
        <location evidence="2">Membrane</location>
        <topology evidence="2">Lipid-anchor</topology>
    </subcellularLocation>
    <subcellularLocation>
        <location evidence="2">Cell membrane</location>
    </subcellularLocation>
    <subcellularLocation>
        <location evidence="2">Cell projection</location>
        <location evidence="2">Lamellipodium</location>
    </subcellularLocation>
    <subcellularLocation>
        <location evidence="3">Cell projection</location>
        <location evidence="3">Ruffle membrane</location>
    </subcellularLocation>
</comment>
<comment type="domain">
    <text evidence="1">Binds calcium via its EF-hands. Calcium-binding mediates a conformational change. Can also bind magnesium (By similarity).</text>
</comment>
<comment type="similarity">
    <text evidence="6">Belongs to the calcineurin regulatory subunit family. CHP subfamily.</text>
</comment>
<comment type="sequence caution" evidence="6">
    <conflict type="frameshift">
        <sequence resource="EMBL-CDS" id="AAI35887"/>
    </conflict>
</comment>
<gene>
    <name type="primary">tesc</name>
    <name type="synonym">chp3</name>
</gene>
<reference evidence="7" key="1">
    <citation type="submission" date="2007-03" db="EMBL/GenBank/DDBJ databases">
        <authorList>
            <consortium name="NIH - Xenopus Gene Collection (XGC) project"/>
        </authorList>
    </citation>
    <scope>NUCLEOTIDE SEQUENCE [LARGE SCALE MRNA]</scope>
    <source>
        <strain evidence="7">N6</strain>
        <tissue evidence="7">Ovary</tissue>
        <tissue evidence="8">Tadpole</tissue>
    </source>
</reference>
<evidence type="ECO:0000250" key="1"/>
<evidence type="ECO:0000250" key="2">
    <source>
        <dbReference type="UniProtKB" id="Q96BS2"/>
    </source>
</evidence>
<evidence type="ECO:0000250" key="3">
    <source>
        <dbReference type="UniProtKB" id="Q9JKL5"/>
    </source>
</evidence>
<evidence type="ECO:0000255" key="4"/>
<evidence type="ECO:0000255" key="5">
    <source>
        <dbReference type="PROSITE-ProRule" id="PRU00448"/>
    </source>
</evidence>
<evidence type="ECO:0000305" key="6"/>
<evidence type="ECO:0000312" key="7">
    <source>
        <dbReference type="EMBL" id="AAI21663.1"/>
    </source>
</evidence>
<evidence type="ECO:0000312" key="8">
    <source>
        <dbReference type="EMBL" id="AAI35887.1"/>
    </source>
</evidence>
<keyword id="KW-0106">Calcium</keyword>
<keyword id="KW-1003">Cell membrane</keyword>
<keyword id="KW-0966">Cell projection</keyword>
<keyword id="KW-0963">Cytoplasm</keyword>
<keyword id="KW-0221">Differentiation</keyword>
<keyword id="KW-0449">Lipoprotein</keyword>
<keyword id="KW-0472">Membrane</keyword>
<keyword id="KW-0479">Metal-binding</keyword>
<keyword id="KW-0519">Myristate</keyword>
<keyword id="KW-0539">Nucleus</keyword>
<keyword id="KW-0649">Protein kinase inhibitor</keyword>
<keyword id="KW-1185">Reference proteome</keyword>
<dbReference type="EMBL" id="BC121662">
    <property type="protein sequence ID" value="AAI21663.1"/>
    <property type="molecule type" value="mRNA"/>
</dbReference>
<dbReference type="EMBL" id="BC135886">
    <property type="protein sequence ID" value="AAI35887.1"/>
    <property type="status" value="ALT_FRAME"/>
    <property type="molecule type" value="mRNA"/>
</dbReference>
<dbReference type="RefSeq" id="NP_001072423.1">
    <property type="nucleotide sequence ID" value="NM_001078955.1"/>
</dbReference>
<dbReference type="SMR" id="Q0V9B1"/>
<dbReference type="FunCoup" id="Q0V9B1">
    <property type="interactions" value="453"/>
</dbReference>
<dbReference type="STRING" id="8364.ENSXETP00000030543"/>
<dbReference type="PaxDb" id="8364-ENSXETP00000059666"/>
<dbReference type="DNASU" id="779877"/>
<dbReference type="GeneID" id="779877"/>
<dbReference type="KEGG" id="xtr:779877"/>
<dbReference type="AGR" id="Xenbase:XB-GENE-991111"/>
<dbReference type="CTD" id="54997"/>
<dbReference type="Xenbase" id="XB-GENE-991111">
    <property type="gene designation" value="tesc"/>
</dbReference>
<dbReference type="eggNOG" id="KOG0034">
    <property type="taxonomic scope" value="Eukaryota"/>
</dbReference>
<dbReference type="HOGENOM" id="CLU_061288_10_0_1"/>
<dbReference type="InParanoid" id="Q0V9B1"/>
<dbReference type="OMA" id="TMEPIAM"/>
<dbReference type="OrthoDB" id="191686at2759"/>
<dbReference type="PhylomeDB" id="Q0V9B1"/>
<dbReference type="TreeFam" id="TF354284"/>
<dbReference type="Proteomes" id="UP000008143">
    <property type="component" value="Chromosome 1"/>
</dbReference>
<dbReference type="Bgee" id="ENSXETG00000030230">
    <property type="expression patterns" value="Expressed in heart and 14 other cell types or tissues"/>
</dbReference>
<dbReference type="GO" id="GO:0005737">
    <property type="term" value="C:cytoplasm"/>
    <property type="evidence" value="ECO:0000250"/>
    <property type="project" value="UniProtKB"/>
</dbReference>
<dbReference type="GO" id="GO:0030027">
    <property type="term" value="C:lamellipodium"/>
    <property type="evidence" value="ECO:0000250"/>
    <property type="project" value="UniProtKB"/>
</dbReference>
<dbReference type="GO" id="GO:0005634">
    <property type="term" value="C:nucleus"/>
    <property type="evidence" value="ECO:0000250"/>
    <property type="project" value="UniProtKB"/>
</dbReference>
<dbReference type="GO" id="GO:0005886">
    <property type="term" value="C:plasma membrane"/>
    <property type="evidence" value="ECO:0000250"/>
    <property type="project" value="UniProtKB"/>
</dbReference>
<dbReference type="GO" id="GO:0001726">
    <property type="term" value="C:ruffle"/>
    <property type="evidence" value="ECO:0000250"/>
    <property type="project" value="UniProtKB"/>
</dbReference>
<dbReference type="GO" id="GO:0032587">
    <property type="term" value="C:ruffle membrane"/>
    <property type="evidence" value="ECO:0007669"/>
    <property type="project" value="UniProtKB-SubCell"/>
</dbReference>
<dbReference type="GO" id="GO:0005509">
    <property type="term" value="F:calcium ion binding"/>
    <property type="evidence" value="ECO:0000250"/>
    <property type="project" value="UniProtKB"/>
</dbReference>
<dbReference type="GO" id="GO:0000287">
    <property type="term" value="F:magnesium ion binding"/>
    <property type="evidence" value="ECO:0000250"/>
    <property type="project" value="UniProtKB"/>
</dbReference>
<dbReference type="GO" id="GO:0019212">
    <property type="term" value="F:phosphatase inhibitor activity"/>
    <property type="evidence" value="ECO:0000250"/>
    <property type="project" value="UniProtKB"/>
</dbReference>
<dbReference type="GO" id="GO:0042803">
    <property type="term" value="F:protein homodimerization activity"/>
    <property type="evidence" value="ECO:0000250"/>
    <property type="project" value="UniProtKB"/>
</dbReference>
<dbReference type="GO" id="GO:0004860">
    <property type="term" value="F:protein kinase inhibitor activity"/>
    <property type="evidence" value="ECO:0007669"/>
    <property type="project" value="UniProtKB-KW"/>
</dbReference>
<dbReference type="GO" id="GO:0030154">
    <property type="term" value="P:cell differentiation"/>
    <property type="evidence" value="ECO:0007669"/>
    <property type="project" value="UniProtKB-KW"/>
</dbReference>
<dbReference type="GO" id="GO:0071300">
    <property type="term" value="P:cellular response to retinoic acid"/>
    <property type="evidence" value="ECO:0000250"/>
    <property type="project" value="UniProtKB"/>
</dbReference>
<dbReference type="GO" id="GO:0030854">
    <property type="term" value="P:positive regulation of granulocyte differentiation"/>
    <property type="evidence" value="ECO:0000250"/>
    <property type="project" value="UniProtKB"/>
</dbReference>
<dbReference type="GO" id="GO:0032417">
    <property type="term" value="P:positive regulation of sodium:proton antiporter activity"/>
    <property type="evidence" value="ECO:0000250"/>
    <property type="project" value="UniProtKB"/>
</dbReference>
<dbReference type="GO" id="GO:0072659">
    <property type="term" value="P:protein localization to plasma membrane"/>
    <property type="evidence" value="ECO:0000250"/>
    <property type="project" value="UniProtKB"/>
</dbReference>
<dbReference type="GO" id="GO:0051604">
    <property type="term" value="P:protein maturation"/>
    <property type="evidence" value="ECO:0000250"/>
    <property type="project" value="UniProtKB"/>
</dbReference>
<dbReference type="GO" id="GO:0050821">
    <property type="term" value="P:protein stabilization"/>
    <property type="evidence" value="ECO:0000250"/>
    <property type="project" value="UniProtKB"/>
</dbReference>
<dbReference type="FunFam" id="1.10.238.10:FF:000205">
    <property type="entry name" value="calcineurin B homologous protein 3"/>
    <property type="match status" value="1"/>
</dbReference>
<dbReference type="Gene3D" id="1.10.238.10">
    <property type="entry name" value="EF-hand"/>
    <property type="match status" value="1"/>
</dbReference>
<dbReference type="InterPro" id="IPR052490">
    <property type="entry name" value="CHP3"/>
</dbReference>
<dbReference type="InterPro" id="IPR011992">
    <property type="entry name" value="EF-hand-dom_pair"/>
</dbReference>
<dbReference type="InterPro" id="IPR002048">
    <property type="entry name" value="EF_hand_dom"/>
</dbReference>
<dbReference type="PANTHER" id="PTHR46823">
    <property type="entry name" value="CALCINEURIN B HOMOLOGOUS PROTEIN 3"/>
    <property type="match status" value="1"/>
</dbReference>
<dbReference type="Pfam" id="PF13405">
    <property type="entry name" value="EF-hand_6"/>
    <property type="match status" value="1"/>
</dbReference>
<dbReference type="SMART" id="SM00054">
    <property type="entry name" value="EFh"/>
    <property type="match status" value="1"/>
</dbReference>
<dbReference type="SUPFAM" id="SSF47473">
    <property type="entry name" value="EF-hand"/>
    <property type="match status" value="1"/>
</dbReference>
<dbReference type="PROSITE" id="PS50222">
    <property type="entry name" value="EF_HAND_2"/>
    <property type="match status" value="2"/>
</dbReference>
<proteinExistence type="evidence at transcript level"/>
<sequence length="214" mass="24666">MGLSHSHSVETRQLVEKTGFSAEQIEHLHKRFNSLSGDLLTIRKGHLNGISDLEVNPIRSKIVDAFFDKRNLRKGSSGYVEEINFEEFLTIMSYFRPLSQNMDEENISVCRKDKLRFLFNMYDTDNDSKITLEEYRKVVEELLSGNPNIEKETARSIADGAMLEAASICVGQMEPDQVYEGITFDDFLKIWEGIDIETKMHIRFLNMESIPSCR</sequence>
<protein>
    <recommendedName>
        <fullName>Calcineurin B homologous protein 3</fullName>
    </recommendedName>
    <alternativeName>
        <fullName evidence="2">Tescalcin</fullName>
        <shortName evidence="2">TSC</shortName>
    </alternativeName>
</protein>